<gene>
    <name type="ordered locus">Ba71V-089</name>
    <name type="ORF">G1340L</name>
</gene>
<name>ETFL_ASFB7</name>
<evidence type="ECO:0000250" key="1">
    <source>
        <dbReference type="UniProtKB" id="P20636"/>
    </source>
</evidence>
<evidence type="ECO:0000269" key="2">
    <source>
    </source>
</evidence>
<evidence type="ECO:0000303" key="3">
    <source>
    </source>
</evidence>
<evidence type="ECO:0000305" key="4"/>
<accession>Q65177</accession>
<reference key="1">
    <citation type="journal article" date="1995" name="Virology">
        <title>Analysis of the complete nucleotide sequence of African swine fever virus.</title>
        <authorList>
            <person name="Yanez R.J."/>
            <person name="Rodriguez J.M."/>
            <person name="Nogal M.L."/>
            <person name="Yuste L."/>
            <person name="Enriquez C."/>
            <person name="Rodriguez J.F."/>
            <person name="Vinuela E."/>
        </authorList>
    </citation>
    <scope>NUCLEOTIDE SEQUENCE [LARGE SCALE GENOMIC DNA]</scope>
</reference>
<reference key="2">
    <citation type="journal article" date="2013" name="Virus Res.">
        <title>African swine fever virus transcription.</title>
        <authorList>
            <person name="Rodriguez J.M."/>
            <person name="Salas M.L."/>
        </authorList>
    </citation>
    <scope>REVIEW</scope>
</reference>
<reference key="3">
    <citation type="journal article" date="2018" name="J. Virol.">
        <title>A Proteomic Atlas of the African Swine Fever Virus Particle.</title>
        <authorList>
            <person name="Alejo A."/>
            <person name="Matamoros T."/>
            <person name="Guerra M."/>
            <person name="Andres G."/>
        </authorList>
    </citation>
    <scope>SUBCELLULAR LOCATION</scope>
</reference>
<proteinExistence type="inferred from homology"/>
<organism>
    <name type="scientific">African swine fever virus (strain Badajoz 1971 Vero-adapted)</name>
    <name type="common">Ba71V</name>
    <name type="synonym">ASFV</name>
    <dbReference type="NCBI Taxonomy" id="10498"/>
    <lineage>
        <taxon>Viruses</taxon>
        <taxon>Varidnaviria</taxon>
        <taxon>Bamfordvirae</taxon>
        <taxon>Nucleocytoviricota</taxon>
        <taxon>Pokkesviricetes</taxon>
        <taxon>Asfuvirales</taxon>
        <taxon>Asfarviridae</taxon>
        <taxon>Asfivirus</taxon>
        <taxon>African swine fever virus</taxon>
    </lineage>
</organism>
<sequence>MDFQNDFLTNPLRVTLYNPAENEYTKTFIFLGSVPANVLQACRKDLQRTPKDKEILQNFYGKDWEKKLSQYVVGGDSDDLDEFEKLFVEDSGEETNVMMPEIETMYSEYSIFPEDTFKDIREKIYVATGIPPYRQHIFFFQNNALQVTYRLLLSGSGVALDIRDYKKEFQQVGGLNIDASMESQKDELYVEALDSFQLIKNIHHIFVADLNTLVAPMRRQISIAMEDNYQFDLLYYGLIMKYWPLLSPDAFKLLVQSPLQMEKQYPALSPSLTSLKKRLLLEQKLINFTYARAQQVIAKYEGNRLTRGTLAVTSAMIKISPLVNIQINVRNVFDLFPATPDIPQLVVFFYSKTGPTVVSKHHITSTEPEKFSNKTFRVPTIILIRFINKKAFILTIQNNGHYFIESNWSENERHDFNSVVSTLNNFINPIIHTINDMGPAAFPRGGSLPLPSNEDIQISISSMSVSTFWPYTLSSKGFTELKSRWREYEQAGIISVRGLQQTGIYNFLFKKGIYSYDPHEIERMIIISSGPGRKMDINVALLQNTYAYLFDANVAARWETIYGGRNIRIYHRVTDIKIEMFNITQEEFNYLWVYLFVFLDNLITGPDKILVNKLSQLHDKQQGKGASQLRALQEQDPDLYDLRKYDTQATVYSVLCQHPRPPVIYSEAEVKSMPPAKRKELVKYWNFTEGVPAYYSCPHPDYPHLSLLEGRHPLNYCLPCCQKTKALLGTKRFYINNTCLTKHTFVEQDLEDLNTQTSRHTLSYGKKIPVNRIAFLPHQIADELFLNTIKEPDIFCIVGVEQTMLGISNAGLFYSLARILDLAPKALAIEIAKAANTPQYYILGNGAGNMFSSGAELANLILQTFVEQKNQLLQWDTTWQDIFLDLVAICYDLHCVFFKDKQGDIEFEVSPSTIQKILSPSKKIAIIFDTDEGIYPMAITQQKRFLKNSEAQYIFTEDDPVMEVVQSMSEFMCKDNWWDIHDVKNIPGYTVGKKLINRHNFCYALLIDSDTDRPIYFPIRLSSYIHDDIPIDFDLRPTQIASFEETWKFITLFNKQYKQYEIVPSAVLQNIKKEFVGFLSEGKTGLYFYYAPTQTLPATLEKLPIATLTIDPRDIDQAILYPLEEPYPQQNKANKAFYINHLYKFLLIEFFDVLYGLQSNSTRKHIENLFQKTDFQKITSVTEFYTKLSDFVDLNDIHTIKHILETTDAEHALKVLQKNIFNFDYTLLSPLQSYTYDELCQHLKKLLTPRIEFYEDIETIDRGLINIYTSCQYSTLNQPQCKKKRLRIPVNHFENYIHILAADILNPLKHSTLLLTGLGVIDDLQFILRPQEIISVKNKF</sequence>
<organismHost>
    <name type="scientific">Ornithodoros</name>
    <name type="common">relapsing fever ticks</name>
    <dbReference type="NCBI Taxonomy" id="6937"/>
</organismHost>
<organismHost>
    <name type="scientific">Sus scrofa</name>
    <name type="common">Pig</name>
    <dbReference type="NCBI Taxonomy" id="9823"/>
</organismHost>
<protein>
    <recommendedName>
        <fullName evidence="3">Early transcription factor large subunit homolog</fullName>
        <shortName>pG1340L</shortName>
    </recommendedName>
    <alternativeName>
        <fullName evidence="3">VETFL homolog</fullName>
    </alternativeName>
</protein>
<keyword id="KW-1185">Reference proteome</keyword>
<keyword id="KW-0804">Transcription</keyword>
<keyword id="KW-0805">Transcription regulation</keyword>
<keyword id="KW-0946">Virion</keyword>
<dbReference type="EMBL" id="U18466">
    <property type="protein sequence ID" value="AAA65318.1"/>
    <property type="molecule type" value="Genomic_DNA"/>
</dbReference>
<dbReference type="RefSeq" id="NP_042782.1">
    <property type="nucleotide sequence ID" value="NC_001659.2"/>
</dbReference>
<dbReference type="GeneID" id="22220318"/>
<dbReference type="KEGG" id="vg:22220318"/>
<dbReference type="Proteomes" id="UP000000624">
    <property type="component" value="Segment"/>
</dbReference>
<dbReference type="GO" id="GO:0044423">
    <property type="term" value="C:virion component"/>
    <property type="evidence" value="ECO:0007669"/>
    <property type="project" value="UniProtKB-KW"/>
</dbReference>
<dbReference type="CDD" id="cd17039">
    <property type="entry name" value="Ubl_ubiquitin_like"/>
    <property type="match status" value="1"/>
</dbReference>
<feature type="chain" id="PRO_0000373510" description="Early transcription factor large subunit homolog">
    <location>
        <begin position="1"/>
        <end position="1340"/>
    </location>
</feature>
<comment type="function">
    <text evidence="1">Putative initation factor.</text>
</comment>
<comment type="subcellular location">
    <subcellularLocation>
        <location evidence="2">Virion</location>
    </subcellularLocation>
    <text evidence="2">Found in association with viral nucleoid.</text>
</comment>
<comment type="similarity">
    <text evidence="4">Belongs to the asfivirus G1340L family.</text>
</comment>